<organism>
    <name type="scientific">Canis lupus familiaris</name>
    <name type="common">Dog</name>
    <name type="synonym">Canis familiaris</name>
    <dbReference type="NCBI Taxonomy" id="9615"/>
    <lineage>
        <taxon>Eukaryota</taxon>
        <taxon>Metazoa</taxon>
        <taxon>Chordata</taxon>
        <taxon>Craniata</taxon>
        <taxon>Vertebrata</taxon>
        <taxon>Euteleostomi</taxon>
        <taxon>Mammalia</taxon>
        <taxon>Eutheria</taxon>
        <taxon>Laurasiatheria</taxon>
        <taxon>Carnivora</taxon>
        <taxon>Caniformia</taxon>
        <taxon>Canidae</taxon>
        <taxon>Canis</taxon>
    </lineage>
</organism>
<feature type="initiator methionine" description="Removed" evidence="1">
    <location>
        <position position="1"/>
    </location>
</feature>
<feature type="chain" id="PRO_0000185154" description="Methylosome subunit pICln">
    <location>
        <begin position="2"/>
        <end position="235"/>
    </location>
</feature>
<feature type="region of interest" description="Disordered" evidence="2">
    <location>
        <begin position="1"/>
        <end position="21"/>
    </location>
</feature>
<feature type="region of interest" description="Disordered" evidence="2">
    <location>
        <begin position="133"/>
        <end position="157"/>
    </location>
</feature>
<feature type="region of interest" description="Disordered" evidence="2">
    <location>
        <begin position="195"/>
        <end position="217"/>
    </location>
</feature>
<feature type="compositionally biased region" description="Acidic residues" evidence="2">
    <location>
        <begin position="137"/>
        <end position="151"/>
    </location>
</feature>
<feature type="compositionally biased region" description="Basic and acidic residues" evidence="2">
    <location>
        <begin position="204"/>
        <end position="213"/>
    </location>
</feature>
<feature type="modified residue" description="N-acetylserine" evidence="1">
    <location>
        <position position="2"/>
    </location>
</feature>
<feature type="modified residue" description="Phosphoserine" evidence="1">
    <location>
        <position position="100"/>
    </location>
</feature>
<feature type="modified residue" description="Phosphoserine" evidence="1">
    <location>
        <position position="142"/>
    </location>
</feature>
<feature type="modified residue" description="Phosphoserine" evidence="1">
    <location>
        <position position="191"/>
    </location>
</feature>
<feature type="modified residue" description="Phosphoserine" evidence="1">
    <location>
        <position position="193"/>
    </location>
</feature>
<feature type="modified residue" description="Phosphoserine" evidence="1">
    <location>
        <position position="196"/>
    </location>
</feature>
<feature type="modified residue" description="Phosphoserine" evidence="1">
    <location>
        <position position="208"/>
    </location>
</feature>
<feature type="modified residue" description="Phosphothreonine" evidence="1">
    <location>
        <position position="221"/>
    </location>
</feature>
<feature type="mutagenesis site" description="Removes cAMP sensitivity." evidence="3">
    <original>G</original>
    <variation>A</variation>
    <location>
        <position position="49"/>
    </location>
</feature>
<feature type="mutagenesis site" description="Removes cAMP sensitivity." evidence="3">
    <original>G</original>
    <variation>A</variation>
    <location>
        <position position="51"/>
    </location>
</feature>
<feature type="mutagenesis site" description="Removes cAMP sensitivity." evidence="3">
    <original>G</original>
    <variation>A</variation>
    <location>
        <position position="53"/>
    </location>
</feature>
<feature type="strand" evidence="6">
    <location>
        <begin position="21"/>
        <end position="27"/>
    </location>
</feature>
<feature type="strand" evidence="6">
    <location>
        <begin position="34"/>
        <end position="40"/>
    </location>
</feature>
<feature type="strand" evidence="6">
    <location>
        <begin position="43"/>
        <end position="48"/>
    </location>
</feature>
<feature type="turn" evidence="6">
    <location>
        <begin position="49"/>
        <end position="51"/>
    </location>
</feature>
<feature type="strand" evidence="6">
    <location>
        <begin position="52"/>
        <end position="58"/>
    </location>
</feature>
<feature type="strand" evidence="6">
    <location>
        <begin position="62"/>
        <end position="65"/>
    </location>
</feature>
<feature type="strand" evidence="6">
    <location>
        <begin position="78"/>
        <end position="83"/>
    </location>
</feature>
<feature type="strand" evidence="6">
    <location>
        <begin position="91"/>
        <end position="93"/>
    </location>
</feature>
<feature type="strand" evidence="6">
    <location>
        <begin position="106"/>
        <end position="115"/>
    </location>
</feature>
<feature type="helix" evidence="6">
    <location>
        <begin position="117"/>
        <end position="132"/>
    </location>
</feature>
<proteinExistence type="evidence at protein level"/>
<keyword id="KW-0002">3D-structure</keyword>
<keyword id="KW-0007">Acetylation</keyword>
<keyword id="KW-0963">Cytoplasm</keyword>
<keyword id="KW-0206">Cytoskeleton</keyword>
<keyword id="KW-0507">mRNA processing</keyword>
<keyword id="KW-0508">mRNA splicing</keyword>
<keyword id="KW-0539">Nucleus</keyword>
<keyword id="KW-0597">Phosphoprotein</keyword>
<keyword id="KW-1185">Reference proteome</keyword>
<gene>
    <name type="primary">CLNS1A</name>
    <name type="synonym">ICLN</name>
</gene>
<sequence>MSFLKSFPPPGSAEGLRQQQPETEAVLNGKGLGTGTLYIAESRLSWLDGSGLGFSLEYPTISLHAVSRDLNAYPREHLYVMVNAKFGEESKESVAEEEDSDDDVEPIAEFRFVPSDKSALEAMFTAMCECQALHPDPEDEDSDDYDGEEYDVEAHEQGQGDIPTFYTYEEGLSHLTAEGQATLERLEGMLSQSVSSQYNMAGVRTEDSTRDYEDGMEVDTTPTVAGQFEDADVDH</sequence>
<evidence type="ECO:0000250" key="1">
    <source>
        <dbReference type="UniProtKB" id="P54105"/>
    </source>
</evidence>
<evidence type="ECO:0000256" key="2">
    <source>
        <dbReference type="SAM" id="MobiDB-lite"/>
    </source>
</evidence>
<evidence type="ECO:0000269" key="3">
    <source>
    </source>
</evidence>
<evidence type="ECO:0000305" key="4"/>
<evidence type="ECO:0000305" key="5">
    <source>
    </source>
</evidence>
<evidence type="ECO:0007829" key="6">
    <source>
        <dbReference type="PDB" id="1ZYI"/>
    </source>
</evidence>
<dbReference type="EMBL" id="X65450">
    <property type="protein sequence ID" value="CAA46447.1"/>
    <property type="molecule type" value="mRNA"/>
</dbReference>
<dbReference type="PIR" id="S23401">
    <property type="entry name" value="S23401"/>
</dbReference>
<dbReference type="RefSeq" id="NP_001003288.1">
    <property type="nucleotide sequence ID" value="NM_001003288.1"/>
</dbReference>
<dbReference type="PDB" id="1ZYI">
    <property type="method" value="NMR"/>
    <property type="chains" value="A=18-133"/>
</dbReference>
<dbReference type="PDBsum" id="1ZYI"/>
<dbReference type="BMRB" id="P35521"/>
<dbReference type="SMR" id="P35521"/>
<dbReference type="FunCoup" id="P35521">
    <property type="interactions" value="2382"/>
</dbReference>
<dbReference type="STRING" id="9615.ENSCAFP00000007306"/>
<dbReference type="iPTMnet" id="P35521"/>
<dbReference type="PaxDb" id="9612-ENSCAFP00000007306"/>
<dbReference type="GeneID" id="403971"/>
<dbReference type="KEGG" id="cfa:403971"/>
<dbReference type="CTD" id="1207"/>
<dbReference type="eggNOG" id="KOG3238">
    <property type="taxonomic scope" value="Eukaryota"/>
</dbReference>
<dbReference type="InParanoid" id="P35521"/>
<dbReference type="OrthoDB" id="19714at2759"/>
<dbReference type="EvolutionaryTrace" id="P35521"/>
<dbReference type="Proteomes" id="UP000002254">
    <property type="component" value="Unplaced"/>
</dbReference>
<dbReference type="Proteomes" id="UP000694429">
    <property type="component" value="Unplaced"/>
</dbReference>
<dbReference type="Proteomes" id="UP000694542">
    <property type="component" value="Unplaced"/>
</dbReference>
<dbReference type="Proteomes" id="UP000805418">
    <property type="component" value="Unplaced"/>
</dbReference>
<dbReference type="GO" id="GO:0005856">
    <property type="term" value="C:cytoskeleton"/>
    <property type="evidence" value="ECO:0007669"/>
    <property type="project" value="UniProtKB-SubCell"/>
</dbReference>
<dbReference type="GO" id="GO:0005829">
    <property type="term" value="C:cytosol"/>
    <property type="evidence" value="ECO:0000314"/>
    <property type="project" value="CAFA"/>
</dbReference>
<dbReference type="GO" id="GO:0016020">
    <property type="term" value="C:membrane"/>
    <property type="evidence" value="ECO:0000314"/>
    <property type="project" value="CAFA"/>
</dbReference>
<dbReference type="GO" id="GO:0034709">
    <property type="term" value="C:methylosome"/>
    <property type="evidence" value="ECO:0000250"/>
    <property type="project" value="UniProtKB"/>
</dbReference>
<dbReference type="GO" id="GO:0005634">
    <property type="term" value="C:nucleus"/>
    <property type="evidence" value="ECO:0000250"/>
    <property type="project" value="UniProtKB"/>
</dbReference>
<dbReference type="GO" id="GO:0034715">
    <property type="term" value="C:pICln-Sm protein complex"/>
    <property type="evidence" value="ECO:0000250"/>
    <property type="project" value="UniProtKB"/>
</dbReference>
<dbReference type="GO" id="GO:0005886">
    <property type="term" value="C:plasma membrane"/>
    <property type="evidence" value="ECO:0007669"/>
    <property type="project" value="InterPro"/>
</dbReference>
<dbReference type="GO" id="GO:0032991">
    <property type="term" value="C:protein-containing complex"/>
    <property type="evidence" value="ECO:0000314"/>
    <property type="project" value="CAFA"/>
</dbReference>
<dbReference type="GO" id="GO:0005681">
    <property type="term" value="C:spliceosomal complex"/>
    <property type="evidence" value="ECO:0000318"/>
    <property type="project" value="GO_Central"/>
</dbReference>
<dbReference type="GO" id="GO:0005229">
    <property type="term" value="F:intracellularly calcium-gated chloride channel activity"/>
    <property type="evidence" value="ECO:0000315"/>
    <property type="project" value="CAFA"/>
</dbReference>
<dbReference type="GO" id="GO:0008289">
    <property type="term" value="F:lipid binding"/>
    <property type="evidence" value="ECO:0000269"/>
    <property type="project" value="DisProt"/>
</dbReference>
<dbReference type="GO" id="GO:0005267">
    <property type="term" value="F:potassium channel activity"/>
    <property type="evidence" value="ECO:0000315"/>
    <property type="project" value="CAFA"/>
</dbReference>
<dbReference type="GO" id="GO:0036094">
    <property type="term" value="F:small molecule binding"/>
    <property type="evidence" value="ECO:0000269"/>
    <property type="project" value="DisProt"/>
</dbReference>
<dbReference type="GO" id="GO:1990935">
    <property type="term" value="F:splicing factor binding"/>
    <property type="evidence" value="ECO:0000353"/>
    <property type="project" value="CAFA"/>
</dbReference>
<dbReference type="GO" id="GO:0006884">
    <property type="term" value="P:cell volume homeostasis"/>
    <property type="evidence" value="ECO:0007669"/>
    <property type="project" value="InterPro"/>
</dbReference>
<dbReference type="GO" id="GO:1902476">
    <property type="term" value="P:chloride transmembrane transport"/>
    <property type="evidence" value="ECO:0000315"/>
    <property type="project" value="CAFA"/>
</dbReference>
<dbReference type="GO" id="GO:0045292">
    <property type="term" value="P:mRNA cis splicing, via spliceosome"/>
    <property type="evidence" value="ECO:0000318"/>
    <property type="project" value="GO_Central"/>
</dbReference>
<dbReference type="GO" id="GO:0071805">
    <property type="term" value="P:potassium ion transmembrane transport"/>
    <property type="evidence" value="ECO:0000315"/>
    <property type="project" value="CAFA"/>
</dbReference>
<dbReference type="GO" id="GO:0000387">
    <property type="term" value="P:spliceosomal snRNP assembly"/>
    <property type="evidence" value="ECO:0000250"/>
    <property type="project" value="UniProtKB"/>
</dbReference>
<dbReference type="CDD" id="cd13229">
    <property type="entry name" value="PH_TFIIH"/>
    <property type="match status" value="1"/>
</dbReference>
<dbReference type="DisProt" id="DP00717"/>
<dbReference type="FunFam" id="2.30.29.30:FF:000220">
    <property type="entry name" value="methylosome subunit pICln isoform X1"/>
    <property type="match status" value="1"/>
</dbReference>
<dbReference type="Gene3D" id="2.30.29.30">
    <property type="entry name" value="Pleckstrin-homology domain (PH domain)/Phosphotyrosine-binding domain (PTB)"/>
    <property type="match status" value="1"/>
</dbReference>
<dbReference type="InterPro" id="IPR003521">
    <property type="entry name" value="ICln"/>
</dbReference>
<dbReference type="InterPro" id="IPR039924">
    <property type="entry name" value="ICln/Lot5/Saf5"/>
</dbReference>
<dbReference type="InterPro" id="IPR011993">
    <property type="entry name" value="PH-like_dom_sf"/>
</dbReference>
<dbReference type="PANTHER" id="PTHR21399">
    <property type="entry name" value="CHLORIDE CONDUCTANCE REGULATORY PROTEIN ICLN"/>
    <property type="match status" value="1"/>
</dbReference>
<dbReference type="PANTHER" id="PTHR21399:SF0">
    <property type="entry name" value="METHYLOSOME SUBUNIT PICLN"/>
    <property type="match status" value="1"/>
</dbReference>
<dbReference type="Pfam" id="PF03517">
    <property type="entry name" value="Voldacs"/>
    <property type="match status" value="1"/>
</dbReference>
<dbReference type="PRINTS" id="PR01348">
    <property type="entry name" value="ICLNCHANNEL"/>
</dbReference>
<accession>P35521</accession>
<name>ICLN_CANLF</name>
<reference key="1">
    <citation type="journal article" date="1992" name="Nature">
        <title>New mammalian chloride channel identified by expression cloning.</title>
        <authorList>
            <person name="Paulmichl M."/>
            <person name="Li Y."/>
            <person name="Wickman K."/>
            <person name="Ackerman M."/>
            <person name="Peralta E.G."/>
            <person name="Clapham D.E."/>
        </authorList>
    </citation>
    <scope>NUCLEOTIDE SEQUENCE [MRNA]</scope>
    <scope>MUTAGENESIS</scope>
    <source>
        <tissue>Kidney</tissue>
    </source>
</reference>
<comment type="function">
    <text evidence="1">Involved in both the assembly of spliceosomal snRNPs and the methylation of Sm proteins (By similarity). Chaperone that regulates the assembly of spliceosomal U1, U2, U4 and U5 small nuclear ribonucleoproteins (snRNPs), the building blocks of the spliceosome, and thereby plays an important role in the splicing of cellular pre-mRNAs (By similarity). Most spliceosomal snRNPs contain a common set of Sm proteins SNRPB, SNRPD1, SNRPD2, SNRPD3, SNRPE, SNRPF and SNRPG that assemble in a heptameric protein ring on the Sm site of the small nuclear RNA to form the core snRNP (Sm core) (By similarity). In the cytosol, the Sm proteins SNRPD1, SNRPD2, SNRPE, SNRPF and SNRPG are trapped in an inactive 6S pICln-Sm complex by the chaperone CLNS1A that controls the assembly of the core snRNP (By similarity). Dissociation by the SMN complex of CLNS1A from the trapped Sm proteins and their transfer to an SMN-Sm complex triggers the assembly of core snRNPs and their transport to the nucleus (By similarity).</text>
</comment>
<comment type="subunit">
    <text evidence="1">Component of the methylosome, a 20S complex containing at least PRMT5/SKB1, WDR77/MEP50 and CLNS1A/pICln. May mediate SNRPD1 and SNRPD3 methylation. Forms a 6S pICln-Sm complex composed of CLNS1A/pICln, SNRPD1, SNRPD2, SNRPE, SNRPF and SNRPG; ring-like structure where CLNS1A/pICln mimics additional Sm proteins and which is unable to assemble into the core snRNP. Interacts with LSM10 and LSM11 (By similarity).</text>
</comment>
<comment type="subcellular location">
    <subcellularLocation>
        <location evidence="1">Cytoplasm</location>
        <location evidence="1">Cytosol</location>
    </subcellularLocation>
    <subcellularLocation>
        <location evidence="1">Nucleus</location>
    </subcellularLocation>
    <subcellularLocation>
        <location evidence="1">Cytoplasm</location>
        <location evidence="1">Cytoskeleton</location>
    </subcellularLocation>
    <text evidence="1">A small fraction is also associated with the cytoskeleton.</text>
</comment>
<comment type="similarity">
    <text evidence="4">Belongs to the pICln (TC 1.A.47) family.</text>
</comment>
<comment type="caution">
    <text evidence="5">Was originally thought to be a chloride channel.</text>
</comment>
<protein>
    <recommendedName>
        <fullName>Methylosome subunit pICln</fullName>
    </recommendedName>
    <alternativeName>
        <fullName>Chloride channel, nucleotide sensitive 1A</fullName>
    </alternativeName>
    <alternativeName>
        <fullName>Chloride conductance regulatory protein ICln</fullName>
        <shortName>I(Cln)</shortName>
    </alternativeName>
</protein>